<gene>
    <name type="primary">mutM</name>
    <name type="synonym">fpg</name>
</gene>
<dbReference type="EC" id="3.2.2.23"/>
<dbReference type="EC" id="4.2.99.18"/>
<dbReference type="EMBL" id="X74298">
    <property type="protein sequence ID" value="CAA52351.1"/>
    <property type="molecule type" value="Genomic_DNA"/>
</dbReference>
<dbReference type="EMBL" id="M88106">
    <property type="status" value="NOT_ANNOTATED_CDS"/>
    <property type="molecule type" value="Genomic_DNA"/>
</dbReference>
<dbReference type="PIR" id="S39200">
    <property type="entry name" value="S39200"/>
</dbReference>
<dbReference type="PDB" id="1KFV">
    <property type="method" value="X-ray"/>
    <property type="resolution" value="2.55 A"/>
    <property type="chains" value="A/B=2-273"/>
</dbReference>
<dbReference type="PDB" id="1NNJ">
    <property type="method" value="X-ray"/>
    <property type="resolution" value="1.90 A"/>
    <property type="chains" value="A=2-273"/>
</dbReference>
<dbReference type="PDB" id="1PJI">
    <property type="method" value="X-ray"/>
    <property type="resolution" value="1.90 A"/>
    <property type="chains" value="A=2-273"/>
</dbReference>
<dbReference type="PDB" id="1PJJ">
    <property type="method" value="X-ray"/>
    <property type="resolution" value="1.90 A"/>
    <property type="chains" value="A=2-273"/>
</dbReference>
<dbReference type="PDB" id="1PM5">
    <property type="method" value="X-ray"/>
    <property type="resolution" value="1.95 A"/>
    <property type="chains" value="A=2-273"/>
</dbReference>
<dbReference type="PDB" id="1TDZ">
    <property type="method" value="X-ray"/>
    <property type="resolution" value="1.80 A"/>
    <property type="chains" value="A=1-273"/>
</dbReference>
<dbReference type="PDB" id="1XC8">
    <property type="method" value="X-ray"/>
    <property type="resolution" value="1.95 A"/>
    <property type="chains" value="A=2-273"/>
</dbReference>
<dbReference type="PDB" id="2XZF">
    <property type="method" value="X-ray"/>
    <property type="resolution" value="1.80 A"/>
    <property type="chains" value="A=2-273"/>
</dbReference>
<dbReference type="PDB" id="2XZU">
    <property type="method" value="X-ray"/>
    <property type="resolution" value="1.82 A"/>
    <property type="chains" value="A=2-273"/>
</dbReference>
<dbReference type="PDB" id="3C58">
    <property type="method" value="X-ray"/>
    <property type="resolution" value="1.90 A"/>
    <property type="chains" value="A=2-273"/>
</dbReference>
<dbReference type="PDB" id="4PCZ">
    <property type="method" value="X-ray"/>
    <property type="resolution" value="1.70 A"/>
    <property type="chains" value="A=2-273"/>
</dbReference>
<dbReference type="PDB" id="4PD2">
    <property type="method" value="X-ray"/>
    <property type="resolution" value="1.65 A"/>
    <property type="chains" value="A=2-273"/>
</dbReference>
<dbReference type="PDB" id="4PDG">
    <property type="method" value="X-ray"/>
    <property type="resolution" value="2.40 A"/>
    <property type="chains" value="A=2-273"/>
</dbReference>
<dbReference type="PDB" id="4PDI">
    <property type="method" value="X-ray"/>
    <property type="resolution" value="2.10 A"/>
    <property type="chains" value="A=2-273"/>
</dbReference>
<dbReference type="PDB" id="6H0S">
    <property type="method" value="X-ray"/>
    <property type="resolution" value="1.75 A"/>
    <property type="chains" value="A=2-273"/>
</dbReference>
<dbReference type="PDB" id="6RNM">
    <property type="method" value="X-ray"/>
    <property type="resolution" value="1.76 A"/>
    <property type="chains" value="A=2-273"/>
</dbReference>
<dbReference type="PDB" id="6RNO">
    <property type="method" value="X-ray"/>
    <property type="resolution" value="2.25 A"/>
    <property type="chains" value="A=2-273"/>
</dbReference>
<dbReference type="PDB" id="6RO2">
    <property type="method" value="X-ray"/>
    <property type="resolution" value="1.82 A"/>
    <property type="chains" value="A=2-273"/>
</dbReference>
<dbReference type="PDB" id="6ROK">
    <property type="method" value="X-ray"/>
    <property type="resolution" value="1.95 A"/>
    <property type="chains" value="A=2-273"/>
</dbReference>
<dbReference type="PDB" id="6RP0">
    <property type="method" value="X-ray"/>
    <property type="resolution" value="2.25 A"/>
    <property type="chains" value="A=2-273"/>
</dbReference>
<dbReference type="PDB" id="6RP7">
    <property type="method" value="X-ray"/>
    <property type="resolution" value="2.00 A"/>
    <property type="chains" value="A=2-273"/>
</dbReference>
<dbReference type="PDBsum" id="1KFV"/>
<dbReference type="PDBsum" id="1NNJ"/>
<dbReference type="PDBsum" id="1PJI"/>
<dbReference type="PDBsum" id="1PJJ"/>
<dbReference type="PDBsum" id="1PM5"/>
<dbReference type="PDBsum" id="1TDZ"/>
<dbReference type="PDBsum" id="1XC8"/>
<dbReference type="PDBsum" id="2XZF"/>
<dbReference type="PDBsum" id="2XZU"/>
<dbReference type="PDBsum" id="3C58"/>
<dbReference type="PDBsum" id="4PCZ"/>
<dbReference type="PDBsum" id="4PD2"/>
<dbReference type="PDBsum" id="4PDG"/>
<dbReference type="PDBsum" id="4PDI"/>
<dbReference type="PDBsum" id="6H0S"/>
<dbReference type="PDBsum" id="6RNM"/>
<dbReference type="PDBsum" id="6RNO"/>
<dbReference type="PDBsum" id="6RO2"/>
<dbReference type="PDBsum" id="6ROK"/>
<dbReference type="PDBsum" id="6RP0"/>
<dbReference type="PDBsum" id="6RP7"/>
<dbReference type="SMR" id="P42371"/>
<dbReference type="BRENDA" id="3.2.2.23">
    <property type="organism ID" value="2903"/>
</dbReference>
<dbReference type="EvolutionaryTrace" id="P42371"/>
<dbReference type="GO" id="GO:0034039">
    <property type="term" value="F:8-oxo-7,8-dihydroguanine DNA N-glycosylase activity"/>
    <property type="evidence" value="ECO:0007669"/>
    <property type="project" value="TreeGrafter"/>
</dbReference>
<dbReference type="GO" id="GO:0140078">
    <property type="term" value="F:class I DNA-(apurinic or apyrimidinic site) endonuclease activity"/>
    <property type="evidence" value="ECO:0007669"/>
    <property type="project" value="UniProtKB-EC"/>
</dbReference>
<dbReference type="GO" id="GO:0003684">
    <property type="term" value="F:damaged DNA binding"/>
    <property type="evidence" value="ECO:0007669"/>
    <property type="project" value="InterPro"/>
</dbReference>
<dbReference type="GO" id="GO:0008270">
    <property type="term" value="F:zinc ion binding"/>
    <property type="evidence" value="ECO:0007669"/>
    <property type="project" value="UniProtKB-UniRule"/>
</dbReference>
<dbReference type="GO" id="GO:0006284">
    <property type="term" value="P:base-excision repair"/>
    <property type="evidence" value="ECO:0007669"/>
    <property type="project" value="InterPro"/>
</dbReference>
<dbReference type="CDD" id="cd08966">
    <property type="entry name" value="EcFpg-like_N"/>
    <property type="match status" value="1"/>
</dbReference>
<dbReference type="FunFam" id="1.10.8.50:FF:000003">
    <property type="entry name" value="Formamidopyrimidine-DNA glycosylase"/>
    <property type="match status" value="1"/>
</dbReference>
<dbReference type="FunFam" id="3.20.190.10:FF:000001">
    <property type="entry name" value="Formamidopyrimidine-DNA glycosylase"/>
    <property type="match status" value="1"/>
</dbReference>
<dbReference type="Gene3D" id="1.10.8.50">
    <property type="match status" value="1"/>
</dbReference>
<dbReference type="Gene3D" id="3.20.190.10">
    <property type="entry name" value="MutM-like, N-terminal"/>
    <property type="match status" value="1"/>
</dbReference>
<dbReference type="HAMAP" id="MF_00103">
    <property type="entry name" value="Fapy_DNA_glycosyl"/>
    <property type="match status" value="1"/>
</dbReference>
<dbReference type="InterPro" id="IPR015886">
    <property type="entry name" value="DNA_glyclase/AP_lyase_DNA-bd"/>
</dbReference>
<dbReference type="InterPro" id="IPR015887">
    <property type="entry name" value="DNA_glyclase_Znf_dom_DNA_BS"/>
</dbReference>
<dbReference type="InterPro" id="IPR020629">
    <property type="entry name" value="Formamido-pyr_DNA_Glyclase"/>
</dbReference>
<dbReference type="InterPro" id="IPR012319">
    <property type="entry name" value="FPG_cat"/>
</dbReference>
<dbReference type="InterPro" id="IPR035937">
    <property type="entry name" value="MutM-like_N-ter"/>
</dbReference>
<dbReference type="InterPro" id="IPR010979">
    <property type="entry name" value="Ribosomal_uS13-like_H2TH"/>
</dbReference>
<dbReference type="InterPro" id="IPR000214">
    <property type="entry name" value="Znf_DNA_glyclase/AP_lyase"/>
</dbReference>
<dbReference type="InterPro" id="IPR010663">
    <property type="entry name" value="Znf_FPG/IleRS"/>
</dbReference>
<dbReference type="NCBIfam" id="TIGR00577">
    <property type="entry name" value="fpg"/>
    <property type="match status" value="1"/>
</dbReference>
<dbReference type="NCBIfam" id="NF002211">
    <property type="entry name" value="PRK01103.1"/>
    <property type="match status" value="1"/>
</dbReference>
<dbReference type="PANTHER" id="PTHR22993">
    <property type="entry name" value="FORMAMIDOPYRIMIDINE-DNA GLYCOSYLASE"/>
    <property type="match status" value="1"/>
</dbReference>
<dbReference type="PANTHER" id="PTHR22993:SF9">
    <property type="entry name" value="FORMAMIDOPYRIMIDINE-DNA GLYCOSYLASE"/>
    <property type="match status" value="1"/>
</dbReference>
<dbReference type="Pfam" id="PF01149">
    <property type="entry name" value="Fapy_DNA_glyco"/>
    <property type="match status" value="1"/>
</dbReference>
<dbReference type="Pfam" id="PF06831">
    <property type="entry name" value="H2TH"/>
    <property type="match status" value="1"/>
</dbReference>
<dbReference type="Pfam" id="PF06827">
    <property type="entry name" value="zf-FPG_IleRS"/>
    <property type="match status" value="1"/>
</dbReference>
<dbReference type="SMART" id="SM00898">
    <property type="entry name" value="Fapy_DNA_glyco"/>
    <property type="match status" value="1"/>
</dbReference>
<dbReference type="SMART" id="SM01232">
    <property type="entry name" value="H2TH"/>
    <property type="match status" value="1"/>
</dbReference>
<dbReference type="SUPFAM" id="SSF57716">
    <property type="entry name" value="Glucocorticoid receptor-like (DNA-binding domain)"/>
    <property type="match status" value="1"/>
</dbReference>
<dbReference type="SUPFAM" id="SSF81624">
    <property type="entry name" value="N-terminal domain of MutM-like DNA repair proteins"/>
    <property type="match status" value="1"/>
</dbReference>
<dbReference type="SUPFAM" id="SSF46946">
    <property type="entry name" value="S13-like H2TH domain"/>
    <property type="match status" value="1"/>
</dbReference>
<dbReference type="PROSITE" id="PS51068">
    <property type="entry name" value="FPG_CAT"/>
    <property type="match status" value="1"/>
</dbReference>
<dbReference type="PROSITE" id="PS01242">
    <property type="entry name" value="ZF_FPG_1"/>
    <property type="match status" value="1"/>
</dbReference>
<dbReference type="PROSITE" id="PS51066">
    <property type="entry name" value="ZF_FPG_2"/>
    <property type="match status" value="1"/>
</dbReference>
<evidence type="ECO:0000269" key="1">
    <source>
    </source>
</evidence>
<evidence type="ECO:0000269" key="2">
    <source>
    </source>
</evidence>
<evidence type="ECO:0000305" key="3"/>
<evidence type="ECO:0007829" key="4">
    <source>
        <dbReference type="PDB" id="1XC8"/>
    </source>
</evidence>
<evidence type="ECO:0007829" key="5">
    <source>
        <dbReference type="PDB" id="4PCZ"/>
    </source>
</evidence>
<evidence type="ECO:0007829" key="6">
    <source>
        <dbReference type="PDB" id="4PD2"/>
    </source>
</evidence>
<organism>
    <name type="scientific">Lactococcus lactis subsp. cremoris</name>
    <name type="common">Streptococcus cremoris</name>
    <dbReference type="NCBI Taxonomy" id="1359"/>
    <lineage>
        <taxon>Bacteria</taxon>
        <taxon>Bacillati</taxon>
        <taxon>Bacillota</taxon>
        <taxon>Bacilli</taxon>
        <taxon>Lactobacillales</taxon>
        <taxon>Streptococcaceae</taxon>
        <taxon>Lactococcus</taxon>
    </lineage>
</organism>
<accession>P42371</accession>
<reference key="1">
    <citation type="journal article" date="1995" name="Microbiology">
        <title>Repair of oxidative DNA damage in Gram-positive bacteria: the Lactococcus lactis Fpg protein.</title>
        <authorList>
            <person name="Duwat P."/>
            <person name="de Oliveira R."/>
            <person name="Ehrlich S.D."/>
            <person name="Boiteux S."/>
        </authorList>
    </citation>
    <scope>NUCLEOTIDE SEQUENCE [GENOMIC DNA]</scope>
    <scope>PROTEIN SEQUENCE OF 2-22</scope>
    <scope>FUNCTION</scope>
    <source>
        <strain>NCDO 763 / ML3</strain>
    </source>
</reference>
<reference key="2">
    <citation type="journal article" date="1992" name="Appl. Environ. Microbiol.">
        <title>Use of degenerate primers for polymerase chain reaction cloning and sequencing of the Lactococcus lactis subsp. lactis recA gene.</title>
        <authorList>
            <person name="Duwat P."/>
            <person name="Ehrlich S.D."/>
            <person name="Gruss A."/>
        </authorList>
    </citation>
    <scope>NUCLEOTIDE SEQUENCE [GENOMIC DNA] OF 194-273</scope>
    <source>
        <strain>NCDO 763 / ML3</strain>
    </source>
</reference>
<reference key="3">
    <citation type="journal article" date="2002" name="EMBO J.">
        <title>Crystal structure of the Lactococcus lactis formamidopyrimidine-DNA glycosylase bound to an abasic site analogue-containing DNA.</title>
        <authorList>
            <person name="Serre L."/>
            <person name="Pereira de Jesus K."/>
            <person name="Boiteux S."/>
            <person name="Zelwer C."/>
            <person name="Castaing B."/>
        </authorList>
    </citation>
    <scope>X-RAY CRYSTALLOGRAPHY (1.9 ANGSTROMS) OF 1-273 OF MUTANT GLY-2 IN COMPLEX WITH SUBSTRATE ANALOG</scope>
</reference>
<sequence>MPELPEVETVRRELEKRIVGQKIISIEATYPRMVLTGFEQLKKELTGKTIQGISRRGKYLIFEIGDDFRLISHLRMEGKYRLATLDAPREKHDHLTMKFADGQLIYADVRKFGTWELISTDQVLPYFLKKKIGPEPTYDEDFDEKLFREKLRKSTKKIKPYLLEQTLVAGLGNIYVDEVLWLAKIHPEKETNQLIESSIHLLHDSIIEILQKAIKLGGSSIRTYSALGSTGKMQNELQVYGKTGEKCSRCGAEIQKIKVAGRGTHFCPVCQQK</sequence>
<proteinExistence type="evidence at protein level"/>
<name>FPG_LACLC</name>
<keyword id="KW-0002">3D-structure</keyword>
<keyword id="KW-0903">Direct protein sequencing</keyword>
<keyword id="KW-0227">DNA damage</keyword>
<keyword id="KW-0234">DNA repair</keyword>
<keyword id="KW-0238">DNA-binding</keyword>
<keyword id="KW-0326">Glycosidase</keyword>
<keyword id="KW-0378">Hydrolase</keyword>
<keyword id="KW-0456">Lyase</keyword>
<keyword id="KW-0479">Metal-binding</keyword>
<keyword id="KW-0511">Multifunctional enzyme</keyword>
<keyword id="KW-0862">Zinc</keyword>
<keyword id="KW-0863">Zinc-finger</keyword>
<feature type="initiator methionine" description="Removed" evidence="2">
    <location>
        <position position="1"/>
    </location>
</feature>
<feature type="chain" id="PRO_0000170830" description="Formamidopyrimidine-DNA glycosylase">
    <location>
        <begin position="2"/>
        <end position="273"/>
    </location>
</feature>
<feature type="zinc finger region" description="FPG-type">
    <location>
        <begin position="238"/>
        <end position="272"/>
    </location>
</feature>
<feature type="region of interest" description="DNA-binding">
    <location>
        <begin position="58"/>
        <end position="76"/>
    </location>
</feature>
<feature type="region of interest" description="DNA-binding">
    <location>
        <begin position="162"/>
        <end position="172"/>
    </location>
</feature>
<feature type="active site" description="Schiff-base intermediate with DNA" evidence="3">
    <location>
        <position position="2"/>
    </location>
</feature>
<feature type="active site" description="Proton donor" evidence="3">
    <location>
        <position position="3"/>
    </location>
</feature>
<feature type="active site" description="Proton donor; for beta-elimination activity" evidence="3">
    <location>
        <position position="58"/>
    </location>
</feature>
<feature type="active site" description="Proton donor; for delta-elimination activity" evidence="3">
    <location>
        <position position="262"/>
    </location>
</feature>
<feature type="binding site">
    <location>
        <position position="92"/>
    </location>
    <ligand>
        <name>DNA</name>
        <dbReference type="ChEBI" id="CHEBI:16991"/>
    </ligand>
</feature>
<feature type="binding site">
    <location>
        <position position="110"/>
    </location>
    <ligand>
        <name>DNA</name>
        <dbReference type="ChEBI" id="CHEBI:16991"/>
    </ligand>
</feature>
<feature type="mutagenesis site" description="Loss of activity.">
    <original>P</original>
    <variation>G</variation>
    <location>
        <position position="2"/>
    </location>
</feature>
<feature type="helix" evidence="6">
    <location>
        <begin position="4"/>
        <end position="18"/>
    </location>
</feature>
<feature type="strand" evidence="6">
    <location>
        <begin position="25"/>
        <end position="29"/>
    </location>
</feature>
<feature type="helix" evidence="6">
    <location>
        <begin position="31"/>
        <end position="33"/>
    </location>
</feature>
<feature type="helix" evidence="6">
    <location>
        <begin position="38"/>
        <end position="45"/>
    </location>
</feature>
<feature type="strand" evidence="6">
    <location>
        <begin position="49"/>
        <end position="56"/>
    </location>
</feature>
<feature type="strand" evidence="6">
    <location>
        <begin position="59"/>
        <end position="64"/>
    </location>
</feature>
<feature type="turn" evidence="6">
    <location>
        <begin position="65"/>
        <end position="67"/>
    </location>
</feature>
<feature type="strand" evidence="6">
    <location>
        <begin position="68"/>
        <end position="73"/>
    </location>
</feature>
<feature type="turn" evidence="6">
    <location>
        <begin position="75"/>
        <end position="77"/>
    </location>
</feature>
<feature type="strand" evidence="6">
    <location>
        <begin position="79"/>
        <end position="83"/>
    </location>
</feature>
<feature type="strand" evidence="6">
    <location>
        <begin position="93"/>
        <end position="98"/>
    </location>
</feature>
<feature type="strand" evidence="6">
    <location>
        <begin position="103"/>
        <end position="107"/>
    </location>
</feature>
<feature type="strand" evidence="6">
    <location>
        <begin position="114"/>
        <end position="119"/>
    </location>
</feature>
<feature type="helix" evidence="6">
    <location>
        <begin position="120"/>
        <end position="122"/>
    </location>
</feature>
<feature type="helix" evidence="6">
    <location>
        <begin position="123"/>
        <end position="129"/>
    </location>
</feature>
<feature type="helix" evidence="6">
    <location>
        <begin position="144"/>
        <end position="153"/>
    </location>
</feature>
<feature type="helix" evidence="6">
    <location>
        <begin position="158"/>
        <end position="163"/>
    </location>
</feature>
<feature type="strand" evidence="6">
    <location>
        <begin position="165"/>
        <end position="169"/>
    </location>
</feature>
<feature type="helix" evidence="6">
    <location>
        <begin position="173"/>
        <end position="182"/>
    </location>
</feature>
<feature type="helix" evidence="6">
    <location>
        <begin position="191"/>
        <end position="193"/>
    </location>
</feature>
<feature type="helix" evidence="6">
    <location>
        <begin position="196"/>
        <end position="215"/>
    </location>
</feature>
<feature type="strand" evidence="4">
    <location>
        <begin position="221"/>
        <end position="223"/>
    </location>
</feature>
<feature type="turn" evidence="6">
    <location>
        <begin position="227"/>
        <end position="230"/>
    </location>
</feature>
<feature type="helix" evidence="6">
    <location>
        <begin position="233"/>
        <end position="236"/>
    </location>
</feature>
<feature type="turn" evidence="5">
    <location>
        <begin position="248"/>
        <end position="250"/>
    </location>
</feature>
<feature type="strand" evidence="6">
    <location>
        <begin position="255"/>
        <end position="259"/>
    </location>
</feature>
<feature type="strand" evidence="6">
    <location>
        <begin position="262"/>
        <end position="266"/>
    </location>
</feature>
<feature type="turn" evidence="6">
    <location>
        <begin position="268"/>
        <end position="270"/>
    </location>
</feature>
<comment type="function">
    <text evidence="2">Involved in base excision repair of DNA damaged by oxidation or by mutagenic agents. Acts as a DNA glycosylase that recognizes and removes damaged bases. Has a preference for oxidized purines, such as 7,8-dihydro-8-oxoguanine (8-oxoG). Has AP (apurinic/apyrimidinic) lyase activity and introduces nicks in the DNA strand. Cleaves the DNA backbone by beta-delta elimination to generate a single-strand break at the site of the removed base with both 3'- and 5'-phosphates.</text>
</comment>
<comment type="catalytic activity">
    <reaction>
        <text>Hydrolysis of DNA containing ring-opened 7-methylguanine residues, releasing 2,6-diamino-4-hydroxy-5-(N-methyl)formamidopyrimidine.</text>
        <dbReference type="EC" id="3.2.2.23"/>
    </reaction>
</comment>
<comment type="catalytic activity">
    <reaction>
        <text>2'-deoxyribonucleotide-(2'-deoxyribose 5'-phosphate)-2'-deoxyribonucleotide-DNA = a 3'-end 2'-deoxyribonucleotide-(2,3-dehydro-2,3-deoxyribose 5'-phosphate)-DNA + a 5'-end 5'-phospho-2'-deoxyribonucleoside-DNA + H(+)</text>
        <dbReference type="Rhea" id="RHEA:66592"/>
        <dbReference type="Rhea" id="RHEA-COMP:13180"/>
        <dbReference type="Rhea" id="RHEA-COMP:16897"/>
        <dbReference type="Rhea" id="RHEA-COMP:17067"/>
        <dbReference type="ChEBI" id="CHEBI:15378"/>
        <dbReference type="ChEBI" id="CHEBI:136412"/>
        <dbReference type="ChEBI" id="CHEBI:157695"/>
        <dbReference type="ChEBI" id="CHEBI:167181"/>
        <dbReference type="EC" id="4.2.99.18"/>
    </reaction>
</comment>
<comment type="cofactor">
    <cofactor>
        <name>Zn(2+)</name>
        <dbReference type="ChEBI" id="CHEBI:29105"/>
    </cofactor>
    <text>Binds 1 zinc ion per subunit.</text>
</comment>
<comment type="subunit">
    <text evidence="1">Monomer.</text>
</comment>
<comment type="miscellaneous">
    <text>The zinc finger is important for DNA binding.</text>
</comment>
<comment type="similarity">
    <text evidence="3">Belongs to the FPG family.</text>
</comment>
<protein>
    <recommendedName>
        <fullName>Formamidopyrimidine-DNA glycosylase</fullName>
        <shortName>Fapy-DNA glycosylase</shortName>
        <ecNumber>3.2.2.23</ecNumber>
    </recommendedName>
    <alternativeName>
        <fullName>DNA-(apurinic or apyrimidinic site) lyase MutM</fullName>
        <shortName>AP lyase MutM</shortName>
        <ecNumber>4.2.99.18</ecNumber>
    </alternativeName>
</protein>